<proteinExistence type="inferred from homology"/>
<accession>A8F4R1</accession>
<sequence>MKMILGRKIGMTRLFINDVSIPVTVVRAGPCYVVQKKNPQIDGYCAIQVGFEHLKRVNKPLEGHFKKAQVKPLRLLREIRLEDENELDSYEIGQEIKLDIFQPGEKVDITGWTKGRGFSGGIKRWGFSGGPRAHGSKFHRELGSLGQHTEPAKIFKGKKMPGRYGNERVTIHNLEVIKIDLENNLLVLKGSVPGARGSLVIIKSPRRTRK</sequence>
<reference key="1">
    <citation type="submission" date="2007-08" db="EMBL/GenBank/DDBJ databases">
        <title>Complete sequence of Thermotoga lettingae TMO.</title>
        <authorList>
            <consortium name="US DOE Joint Genome Institute"/>
            <person name="Copeland A."/>
            <person name="Lucas S."/>
            <person name="Lapidus A."/>
            <person name="Barry K."/>
            <person name="Glavina del Rio T."/>
            <person name="Dalin E."/>
            <person name="Tice H."/>
            <person name="Pitluck S."/>
            <person name="Foster B."/>
            <person name="Bruce D."/>
            <person name="Schmutz J."/>
            <person name="Larimer F."/>
            <person name="Land M."/>
            <person name="Hauser L."/>
            <person name="Kyrpides N."/>
            <person name="Mikhailova N."/>
            <person name="Nelson K."/>
            <person name="Gogarten J.P."/>
            <person name="Noll K."/>
            <person name="Richardson P."/>
        </authorList>
    </citation>
    <scope>NUCLEOTIDE SEQUENCE [LARGE SCALE GENOMIC DNA]</scope>
    <source>
        <strain>ATCC BAA-301 / DSM 14385 / NBRC 107922 / TMO</strain>
    </source>
</reference>
<feature type="chain" id="PRO_1000067572" description="Large ribosomal subunit protein uL3">
    <location>
        <begin position="1"/>
        <end position="210"/>
    </location>
</feature>
<comment type="function">
    <text evidence="1">One of the primary rRNA binding proteins, it binds directly near the 3'-end of the 23S rRNA, where it nucleates assembly of the 50S subunit.</text>
</comment>
<comment type="subunit">
    <text evidence="1">Part of the 50S ribosomal subunit. Forms a cluster with proteins L14 and L19.</text>
</comment>
<comment type="similarity">
    <text evidence="1">Belongs to the universal ribosomal protein uL3 family.</text>
</comment>
<keyword id="KW-1185">Reference proteome</keyword>
<keyword id="KW-0687">Ribonucleoprotein</keyword>
<keyword id="KW-0689">Ribosomal protein</keyword>
<keyword id="KW-0694">RNA-binding</keyword>
<keyword id="KW-0699">rRNA-binding</keyword>
<name>RL3_PSELT</name>
<protein>
    <recommendedName>
        <fullName evidence="1">Large ribosomal subunit protein uL3</fullName>
    </recommendedName>
    <alternativeName>
        <fullName evidence="2">50S ribosomal protein L3</fullName>
    </alternativeName>
</protein>
<gene>
    <name evidence="1" type="primary">rplC</name>
    <name type="ordered locus">Tlet_0579</name>
</gene>
<organism>
    <name type="scientific">Pseudothermotoga lettingae (strain ATCC BAA-301 / DSM 14385 / NBRC 107922 / TMO)</name>
    <name type="common">Thermotoga lettingae</name>
    <dbReference type="NCBI Taxonomy" id="416591"/>
    <lineage>
        <taxon>Bacteria</taxon>
        <taxon>Thermotogati</taxon>
        <taxon>Thermotogota</taxon>
        <taxon>Thermotogae</taxon>
        <taxon>Thermotogales</taxon>
        <taxon>Thermotogaceae</taxon>
        <taxon>Pseudothermotoga</taxon>
    </lineage>
</organism>
<dbReference type="EMBL" id="CP000812">
    <property type="protein sequence ID" value="ABV33145.1"/>
    <property type="molecule type" value="Genomic_DNA"/>
</dbReference>
<dbReference type="RefSeq" id="WP_012002626.1">
    <property type="nucleotide sequence ID" value="NZ_BSDV01000001.1"/>
</dbReference>
<dbReference type="SMR" id="A8F4R1"/>
<dbReference type="STRING" id="416591.Tlet_0579"/>
<dbReference type="KEGG" id="tle:Tlet_0579"/>
<dbReference type="eggNOG" id="COG0087">
    <property type="taxonomic scope" value="Bacteria"/>
</dbReference>
<dbReference type="HOGENOM" id="CLU_044142_4_1_0"/>
<dbReference type="OrthoDB" id="9806135at2"/>
<dbReference type="Proteomes" id="UP000002016">
    <property type="component" value="Chromosome"/>
</dbReference>
<dbReference type="GO" id="GO:0022625">
    <property type="term" value="C:cytosolic large ribosomal subunit"/>
    <property type="evidence" value="ECO:0007669"/>
    <property type="project" value="TreeGrafter"/>
</dbReference>
<dbReference type="GO" id="GO:0019843">
    <property type="term" value="F:rRNA binding"/>
    <property type="evidence" value="ECO:0007669"/>
    <property type="project" value="UniProtKB-UniRule"/>
</dbReference>
<dbReference type="GO" id="GO:0003735">
    <property type="term" value="F:structural constituent of ribosome"/>
    <property type="evidence" value="ECO:0007669"/>
    <property type="project" value="InterPro"/>
</dbReference>
<dbReference type="GO" id="GO:0006412">
    <property type="term" value="P:translation"/>
    <property type="evidence" value="ECO:0007669"/>
    <property type="project" value="UniProtKB-UniRule"/>
</dbReference>
<dbReference type="FunFam" id="2.40.30.10:FF:000004">
    <property type="entry name" value="50S ribosomal protein L3"/>
    <property type="match status" value="1"/>
</dbReference>
<dbReference type="FunFam" id="3.30.160.810:FF:000001">
    <property type="entry name" value="50S ribosomal protein L3"/>
    <property type="match status" value="1"/>
</dbReference>
<dbReference type="Gene3D" id="3.30.160.810">
    <property type="match status" value="1"/>
</dbReference>
<dbReference type="Gene3D" id="2.40.30.10">
    <property type="entry name" value="Translation factors"/>
    <property type="match status" value="1"/>
</dbReference>
<dbReference type="HAMAP" id="MF_01325_B">
    <property type="entry name" value="Ribosomal_uL3_B"/>
    <property type="match status" value="1"/>
</dbReference>
<dbReference type="InterPro" id="IPR000597">
    <property type="entry name" value="Ribosomal_uL3"/>
</dbReference>
<dbReference type="InterPro" id="IPR019927">
    <property type="entry name" value="Ribosomal_uL3_bac/org-type"/>
</dbReference>
<dbReference type="InterPro" id="IPR019926">
    <property type="entry name" value="Ribosomal_uL3_CS"/>
</dbReference>
<dbReference type="InterPro" id="IPR009000">
    <property type="entry name" value="Transl_B-barrel_sf"/>
</dbReference>
<dbReference type="NCBIfam" id="TIGR03625">
    <property type="entry name" value="L3_bact"/>
    <property type="match status" value="1"/>
</dbReference>
<dbReference type="PANTHER" id="PTHR11229">
    <property type="entry name" value="50S RIBOSOMAL PROTEIN L3"/>
    <property type="match status" value="1"/>
</dbReference>
<dbReference type="PANTHER" id="PTHR11229:SF16">
    <property type="entry name" value="LARGE RIBOSOMAL SUBUNIT PROTEIN UL3C"/>
    <property type="match status" value="1"/>
</dbReference>
<dbReference type="Pfam" id="PF00297">
    <property type="entry name" value="Ribosomal_L3"/>
    <property type="match status" value="1"/>
</dbReference>
<dbReference type="SUPFAM" id="SSF50447">
    <property type="entry name" value="Translation proteins"/>
    <property type="match status" value="1"/>
</dbReference>
<dbReference type="PROSITE" id="PS00474">
    <property type="entry name" value="RIBOSOMAL_L3"/>
    <property type="match status" value="1"/>
</dbReference>
<evidence type="ECO:0000255" key="1">
    <source>
        <dbReference type="HAMAP-Rule" id="MF_01325"/>
    </source>
</evidence>
<evidence type="ECO:0000305" key="2"/>